<sequence length="637" mass="69473">MQNYKFLKDINFPSDLRKLSENDLQEVSNEVRKEMIDAVSETGGHLGAGLGVVELTVALHYVFDTPNDRLIWDVGHQTYPHKILTGRKSKIKTLRQGNGLSGFTKRSESEYDPFGAAHSSTSISSALGMAEANKLSNKLNNIIAVIGDGAISAGMAYEAMNNAGASKTKMIVILNDNDMSIAKPVGAMRTYLAKLLTGKIYFSLRETFKLIVSAFSKRFSVKAGKAEDFLRSAVTGGTLFNSLGFYYVGPIDGHDLSTLIPILKNARDSKHQGPIMIHIKTQKGKGYSYAEKASDHYHGVSKFNVVTGEQVKSGTNLPAYTKVFANTLVKHAERDSKVVGVTAAMPGGTGMDIFAKDFPKRMFDVGIAEQHAVTFAAGLATEGYKPYVAIYSTFLQRAYDQVVHDVAIQSLPVRFIIDRAGLVGADGSTHAGSFDITYLSTLPNFIVMAPSDEAELVKMTNTSMTINNKPCAIRYPRGNGIGVELPSIDENIEIGKGRVIQEGKQVCILSIGTRLEECKIAAAELKNKGIESTIVDARFAKPLDQELILKCAREHEAMITVEEGSIGGFGSHVENLLSEKGIFDKGLKFRTMILPDIFIEQDSPKKMYDVAGLNASQISKKILDILFTKESIKVVKN</sequence>
<protein>
    <recommendedName>
        <fullName evidence="1">1-deoxy-D-xylulose-5-phosphate synthase</fullName>
        <ecNumber evidence="1">2.2.1.7</ecNumber>
    </recommendedName>
    <alternativeName>
        <fullName evidence="1">1-deoxyxylulose-5-phosphate synthase</fullName>
        <shortName evidence="1">DXP synthase</shortName>
        <shortName evidence="1">DXPS</shortName>
    </alternativeName>
</protein>
<accession>Q4FN07</accession>
<feature type="chain" id="PRO_0000256452" description="1-deoxy-D-xylulose-5-phosphate synthase">
    <location>
        <begin position="1"/>
        <end position="637"/>
    </location>
</feature>
<feature type="binding site" evidence="1">
    <location>
        <position position="76"/>
    </location>
    <ligand>
        <name>thiamine diphosphate</name>
        <dbReference type="ChEBI" id="CHEBI:58937"/>
    </ligand>
</feature>
<feature type="binding site" evidence="1">
    <location>
        <begin position="117"/>
        <end position="119"/>
    </location>
    <ligand>
        <name>thiamine diphosphate</name>
        <dbReference type="ChEBI" id="CHEBI:58937"/>
    </ligand>
</feature>
<feature type="binding site" evidence="1">
    <location>
        <position position="148"/>
    </location>
    <ligand>
        <name>Mg(2+)</name>
        <dbReference type="ChEBI" id="CHEBI:18420"/>
    </ligand>
</feature>
<feature type="binding site" evidence="1">
    <location>
        <begin position="149"/>
        <end position="150"/>
    </location>
    <ligand>
        <name>thiamine diphosphate</name>
        <dbReference type="ChEBI" id="CHEBI:58937"/>
    </ligand>
</feature>
<feature type="binding site" evidence="1">
    <location>
        <position position="177"/>
    </location>
    <ligand>
        <name>Mg(2+)</name>
        <dbReference type="ChEBI" id="CHEBI:18420"/>
    </ligand>
</feature>
<feature type="binding site" evidence="1">
    <location>
        <position position="177"/>
    </location>
    <ligand>
        <name>thiamine diphosphate</name>
        <dbReference type="ChEBI" id="CHEBI:58937"/>
    </ligand>
</feature>
<feature type="binding site" evidence="1">
    <location>
        <position position="287"/>
    </location>
    <ligand>
        <name>thiamine diphosphate</name>
        <dbReference type="ChEBI" id="CHEBI:58937"/>
    </ligand>
</feature>
<feature type="binding site" evidence="1">
    <location>
        <position position="369"/>
    </location>
    <ligand>
        <name>thiamine diphosphate</name>
        <dbReference type="ChEBI" id="CHEBI:58937"/>
    </ligand>
</feature>
<organism>
    <name type="scientific">Pelagibacter ubique (strain HTCC1062)</name>
    <dbReference type="NCBI Taxonomy" id="335992"/>
    <lineage>
        <taxon>Bacteria</taxon>
        <taxon>Pseudomonadati</taxon>
        <taxon>Pseudomonadota</taxon>
        <taxon>Alphaproteobacteria</taxon>
        <taxon>Candidatus Pelagibacterales</taxon>
        <taxon>Candidatus Pelagibacteraceae</taxon>
        <taxon>Candidatus Pelagibacter</taxon>
    </lineage>
</organism>
<proteinExistence type="inferred from homology"/>
<reference key="1">
    <citation type="journal article" date="2005" name="Science">
        <title>Genome streamlining in a cosmopolitan oceanic bacterium.</title>
        <authorList>
            <person name="Giovannoni S.J."/>
            <person name="Tripp H.J."/>
            <person name="Givan S."/>
            <person name="Podar M."/>
            <person name="Vergin K.L."/>
            <person name="Baptista D."/>
            <person name="Bibbs L."/>
            <person name="Eads J."/>
            <person name="Richardson T.H."/>
            <person name="Noordewier M."/>
            <person name="Rappe M.S."/>
            <person name="Short J.M."/>
            <person name="Carrington J.C."/>
            <person name="Mathur E.J."/>
        </authorList>
    </citation>
    <scope>NUCLEOTIDE SEQUENCE [LARGE SCALE GENOMIC DNA]</scope>
    <source>
        <strain>HTCC1062</strain>
    </source>
</reference>
<keyword id="KW-0414">Isoprene biosynthesis</keyword>
<keyword id="KW-0460">Magnesium</keyword>
<keyword id="KW-0479">Metal-binding</keyword>
<keyword id="KW-1185">Reference proteome</keyword>
<keyword id="KW-0784">Thiamine biosynthesis</keyword>
<keyword id="KW-0786">Thiamine pyrophosphate</keyword>
<keyword id="KW-0808">Transferase</keyword>
<gene>
    <name evidence="1" type="primary">dxs</name>
    <name type="ordered locus">SAR11_0611</name>
</gene>
<evidence type="ECO:0000255" key="1">
    <source>
        <dbReference type="HAMAP-Rule" id="MF_00315"/>
    </source>
</evidence>
<name>DXS_PELUB</name>
<comment type="function">
    <text evidence="1">Catalyzes the acyloin condensation reaction between C atoms 2 and 3 of pyruvate and glyceraldehyde 3-phosphate to yield 1-deoxy-D-xylulose-5-phosphate (DXP).</text>
</comment>
<comment type="catalytic activity">
    <reaction evidence="1">
        <text>D-glyceraldehyde 3-phosphate + pyruvate + H(+) = 1-deoxy-D-xylulose 5-phosphate + CO2</text>
        <dbReference type="Rhea" id="RHEA:12605"/>
        <dbReference type="ChEBI" id="CHEBI:15361"/>
        <dbReference type="ChEBI" id="CHEBI:15378"/>
        <dbReference type="ChEBI" id="CHEBI:16526"/>
        <dbReference type="ChEBI" id="CHEBI:57792"/>
        <dbReference type="ChEBI" id="CHEBI:59776"/>
        <dbReference type="EC" id="2.2.1.7"/>
    </reaction>
</comment>
<comment type="cofactor">
    <cofactor evidence="1">
        <name>Mg(2+)</name>
        <dbReference type="ChEBI" id="CHEBI:18420"/>
    </cofactor>
    <text evidence="1">Binds 1 Mg(2+) ion per subunit.</text>
</comment>
<comment type="cofactor">
    <cofactor evidence="1">
        <name>thiamine diphosphate</name>
        <dbReference type="ChEBI" id="CHEBI:58937"/>
    </cofactor>
    <text evidence="1">Binds 1 thiamine pyrophosphate per subunit.</text>
</comment>
<comment type="pathway">
    <text evidence="1">Metabolic intermediate biosynthesis; 1-deoxy-D-xylulose 5-phosphate biosynthesis; 1-deoxy-D-xylulose 5-phosphate from D-glyceraldehyde 3-phosphate and pyruvate: step 1/1.</text>
</comment>
<comment type="subunit">
    <text evidence="1">Homodimer.</text>
</comment>
<comment type="similarity">
    <text evidence="1">Belongs to the transketolase family. DXPS subfamily.</text>
</comment>
<dbReference type="EC" id="2.2.1.7" evidence="1"/>
<dbReference type="EMBL" id="CP000084">
    <property type="protein sequence ID" value="AAZ21432.1"/>
    <property type="molecule type" value="Genomic_DNA"/>
</dbReference>
<dbReference type="RefSeq" id="WP_011281812.1">
    <property type="nucleotide sequence ID" value="NC_007205.1"/>
</dbReference>
<dbReference type="SMR" id="Q4FN07"/>
<dbReference type="STRING" id="335992.SAR11_0611"/>
<dbReference type="GeneID" id="66295117"/>
<dbReference type="KEGG" id="pub:SAR11_0611"/>
<dbReference type="eggNOG" id="COG1154">
    <property type="taxonomic scope" value="Bacteria"/>
</dbReference>
<dbReference type="HOGENOM" id="CLU_009227_1_4_5"/>
<dbReference type="OrthoDB" id="9803371at2"/>
<dbReference type="UniPathway" id="UPA00064">
    <property type="reaction ID" value="UER00091"/>
</dbReference>
<dbReference type="Proteomes" id="UP000002528">
    <property type="component" value="Chromosome"/>
</dbReference>
<dbReference type="GO" id="GO:0008661">
    <property type="term" value="F:1-deoxy-D-xylulose-5-phosphate synthase activity"/>
    <property type="evidence" value="ECO:0007669"/>
    <property type="project" value="UniProtKB-UniRule"/>
</dbReference>
<dbReference type="GO" id="GO:0000287">
    <property type="term" value="F:magnesium ion binding"/>
    <property type="evidence" value="ECO:0007669"/>
    <property type="project" value="UniProtKB-UniRule"/>
</dbReference>
<dbReference type="GO" id="GO:0030976">
    <property type="term" value="F:thiamine pyrophosphate binding"/>
    <property type="evidence" value="ECO:0007669"/>
    <property type="project" value="UniProtKB-UniRule"/>
</dbReference>
<dbReference type="GO" id="GO:0052865">
    <property type="term" value="P:1-deoxy-D-xylulose 5-phosphate biosynthetic process"/>
    <property type="evidence" value="ECO:0007669"/>
    <property type="project" value="UniProtKB-UniPathway"/>
</dbReference>
<dbReference type="GO" id="GO:0019682">
    <property type="term" value="P:glyceraldehyde-3-phosphate metabolic process"/>
    <property type="evidence" value="ECO:0007669"/>
    <property type="project" value="UniProtKB-ARBA"/>
</dbReference>
<dbReference type="GO" id="GO:0016114">
    <property type="term" value="P:terpenoid biosynthetic process"/>
    <property type="evidence" value="ECO:0007669"/>
    <property type="project" value="UniProtKB-UniRule"/>
</dbReference>
<dbReference type="GO" id="GO:0009228">
    <property type="term" value="P:thiamine biosynthetic process"/>
    <property type="evidence" value="ECO:0007669"/>
    <property type="project" value="UniProtKB-UniRule"/>
</dbReference>
<dbReference type="CDD" id="cd02007">
    <property type="entry name" value="TPP_DXS"/>
    <property type="match status" value="1"/>
</dbReference>
<dbReference type="CDD" id="cd07033">
    <property type="entry name" value="TPP_PYR_DXS_TK_like"/>
    <property type="match status" value="1"/>
</dbReference>
<dbReference type="FunFam" id="3.40.50.920:FF:000002">
    <property type="entry name" value="1-deoxy-D-xylulose-5-phosphate synthase"/>
    <property type="match status" value="1"/>
</dbReference>
<dbReference type="FunFam" id="3.40.50.970:FF:000005">
    <property type="entry name" value="1-deoxy-D-xylulose-5-phosphate synthase"/>
    <property type="match status" value="1"/>
</dbReference>
<dbReference type="Gene3D" id="3.40.50.920">
    <property type="match status" value="1"/>
</dbReference>
<dbReference type="Gene3D" id="3.40.50.970">
    <property type="match status" value="2"/>
</dbReference>
<dbReference type="HAMAP" id="MF_00315">
    <property type="entry name" value="DXP_synth"/>
    <property type="match status" value="1"/>
</dbReference>
<dbReference type="InterPro" id="IPR005477">
    <property type="entry name" value="Dxylulose-5-P_synthase"/>
</dbReference>
<dbReference type="InterPro" id="IPR029061">
    <property type="entry name" value="THDP-binding"/>
</dbReference>
<dbReference type="InterPro" id="IPR009014">
    <property type="entry name" value="Transketo_C/PFOR_II"/>
</dbReference>
<dbReference type="InterPro" id="IPR005475">
    <property type="entry name" value="Transketolase-like_Pyr-bd"/>
</dbReference>
<dbReference type="InterPro" id="IPR033248">
    <property type="entry name" value="Transketolase_C"/>
</dbReference>
<dbReference type="InterPro" id="IPR049557">
    <property type="entry name" value="Transketolase_CS"/>
</dbReference>
<dbReference type="NCBIfam" id="TIGR00204">
    <property type="entry name" value="dxs"/>
    <property type="match status" value="1"/>
</dbReference>
<dbReference type="NCBIfam" id="NF003933">
    <property type="entry name" value="PRK05444.2-2"/>
    <property type="match status" value="1"/>
</dbReference>
<dbReference type="PANTHER" id="PTHR43322">
    <property type="entry name" value="1-D-DEOXYXYLULOSE 5-PHOSPHATE SYNTHASE-RELATED"/>
    <property type="match status" value="1"/>
</dbReference>
<dbReference type="PANTHER" id="PTHR43322:SF5">
    <property type="entry name" value="1-DEOXY-D-XYLULOSE-5-PHOSPHATE SYNTHASE, CHLOROPLASTIC"/>
    <property type="match status" value="1"/>
</dbReference>
<dbReference type="Pfam" id="PF13292">
    <property type="entry name" value="DXP_synthase_N"/>
    <property type="match status" value="1"/>
</dbReference>
<dbReference type="Pfam" id="PF02779">
    <property type="entry name" value="Transket_pyr"/>
    <property type="match status" value="1"/>
</dbReference>
<dbReference type="Pfam" id="PF02780">
    <property type="entry name" value="Transketolase_C"/>
    <property type="match status" value="1"/>
</dbReference>
<dbReference type="SMART" id="SM00861">
    <property type="entry name" value="Transket_pyr"/>
    <property type="match status" value="1"/>
</dbReference>
<dbReference type="SUPFAM" id="SSF52518">
    <property type="entry name" value="Thiamin diphosphate-binding fold (THDP-binding)"/>
    <property type="match status" value="2"/>
</dbReference>
<dbReference type="SUPFAM" id="SSF52922">
    <property type="entry name" value="TK C-terminal domain-like"/>
    <property type="match status" value="1"/>
</dbReference>
<dbReference type="PROSITE" id="PS00801">
    <property type="entry name" value="TRANSKETOLASE_1"/>
    <property type="match status" value="1"/>
</dbReference>